<feature type="chain" id="PRO_0000402062" description="Methylthioribose-1-phosphate isomerase">
    <location>
        <begin position="1"/>
        <end position="380"/>
    </location>
</feature>
<feature type="active site" description="Proton donor" evidence="1">
    <location>
        <position position="257"/>
    </location>
</feature>
<feature type="site" description="Transition state stabilizer" evidence="1">
    <location>
        <position position="177"/>
    </location>
</feature>
<dbReference type="EC" id="5.3.1.23" evidence="1"/>
<dbReference type="EMBL" id="GG738859">
    <property type="protein sequence ID" value="EFC46275.1"/>
    <property type="molecule type" value="Genomic_DNA"/>
</dbReference>
<dbReference type="RefSeq" id="XP_002679019.1">
    <property type="nucleotide sequence ID" value="XM_002678973.1"/>
</dbReference>
<dbReference type="SMR" id="D2VAA9"/>
<dbReference type="FunCoup" id="D2VAA9">
    <property type="interactions" value="248"/>
</dbReference>
<dbReference type="STRING" id="5762.D2VAA9"/>
<dbReference type="EnsemblProtists" id="EFC46275">
    <property type="protein sequence ID" value="EFC46275"/>
    <property type="gene ID" value="NAEGRDRAFT_32363"/>
</dbReference>
<dbReference type="GeneID" id="8859515"/>
<dbReference type="VEuPathDB" id="AmoebaDB:NAEGRDRAFT_32363"/>
<dbReference type="eggNOG" id="KOG1468">
    <property type="taxonomic scope" value="Eukaryota"/>
</dbReference>
<dbReference type="InParanoid" id="D2VAA9"/>
<dbReference type="OMA" id="CETRPLN"/>
<dbReference type="OrthoDB" id="2461at2759"/>
<dbReference type="UniPathway" id="UPA00904">
    <property type="reaction ID" value="UER00874"/>
</dbReference>
<dbReference type="Proteomes" id="UP000006671">
    <property type="component" value="Unassembled WGS sequence"/>
</dbReference>
<dbReference type="GO" id="GO:0005737">
    <property type="term" value="C:cytoplasm"/>
    <property type="evidence" value="ECO:0007669"/>
    <property type="project" value="UniProtKB-SubCell"/>
</dbReference>
<dbReference type="GO" id="GO:0005634">
    <property type="term" value="C:nucleus"/>
    <property type="evidence" value="ECO:0007669"/>
    <property type="project" value="UniProtKB-SubCell"/>
</dbReference>
<dbReference type="GO" id="GO:0046523">
    <property type="term" value="F:S-methyl-5-thioribose-1-phosphate isomerase activity"/>
    <property type="evidence" value="ECO:0007669"/>
    <property type="project" value="UniProtKB-UniRule"/>
</dbReference>
<dbReference type="GO" id="GO:0019509">
    <property type="term" value="P:L-methionine salvage from methylthioadenosine"/>
    <property type="evidence" value="ECO:0007669"/>
    <property type="project" value="UniProtKB-UniRule"/>
</dbReference>
<dbReference type="FunFam" id="1.20.120.420:FF:000003">
    <property type="entry name" value="Methylthioribose-1-phosphate isomerase"/>
    <property type="match status" value="1"/>
</dbReference>
<dbReference type="FunFam" id="3.40.50.10470:FF:000003">
    <property type="entry name" value="Methylthioribose-1-phosphate isomerase"/>
    <property type="match status" value="1"/>
</dbReference>
<dbReference type="Gene3D" id="1.20.120.420">
    <property type="entry name" value="translation initiation factor eif-2b, domain 1"/>
    <property type="match status" value="1"/>
</dbReference>
<dbReference type="Gene3D" id="3.40.50.10470">
    <property type="entry name" value="Translation initiation factor eif-2b, domain 2"/>
    <property type="match status" value="1"/>
</dbReference>
<dbReference type="HAMAP" id="MF_01678">
    <property type="entry name" value="Salvage_MtnA"/>
    <property type="match status" value="1"/>
</dbReference>
<dbReference type="InterPro" id="IPR000649">
    <property type="entry name" value="IF-2B-related"/>
</dbReference>
<dbReference type="InterPro" id="IPR005251">
    <property type="entry name" value="IF-M1Pi"/>
</dbReference>
<dbReference type="InterPro" id="IPR042529">
    <property type="entry name" value="IF_2B-like_C"/>
</dbReference>
<dbReference type="InterPro" id="IPR011559">
    <property type="entry name" value="Initiation_fac_2B_a/b/d"/>
</dbReference>
<dbReference type="InterPro" id="IPR027363">
    <property type="entry name" value="M1Pi_N"/>
</dbReference>
<dbReference type="InterPro" id="IPR037171">
    <property type="entry name" value="NagB/RpiA_transferase-like"/>
</dbReference>
<dbReference type="NCBIfam" id="TIGR00524">
    <property type="entry name" value="eIF-2B_rel"/>
    <property type="match status" value="1"/>
</dbReference>
<dbReference type="NCBIfam" id="NF004326">
    <property type="entry name" value="PRK05720.1"/>
    <property type="match status" value="1"/>
</dbReference>
<dbReference type="NCBIfam" id="TIGR00512">
    <property type="entry name" value="salvage_mtnA"/>
    <property type="match status" value="1"/>
</dbReference>
<dbReference type="PANTHER" id="PTHR43475">
    <property type="entry name" value="METHYLTHIORIBOSE-1-PHOSPHATE ISOMERASE"/>
    <property type="match status" value="1"/>
</dbReference>
<dbReference type="PANTHER" id="PTHR43475:SF1">
    <property type="entry name" value="METHYLTHIORIBOSE-1-PHOSPHATE ISOMERASE"/>
    <property type="match status" value="1"/>
</dbReference>
<dbReference type="Pfam" id="PF01008">
    <property type="entry name" value="IF-2B"/>
    <property type="match status" value="1"/>
</dbReference>
<dbReference type="SUPFAM" id="SSF100950">
    <property type="entry name" value="NagB/RpiA/CoA transferase-like"/>
    <property type="match status" value="1"/>
</dbReference>
<comment type="function">
    <text evidence="1">Catalyzes the interconversion of methylthioribose-1-phosphate (MTR-1-P) into methylthioribulose-1-phosphate (MTRu-1-P).</text>
</comment>
<comment type="catalytic activity">
    <reaction evidence="1">
        <text>5-(methylsulfanyl)-alpha-D-ribose 1-phosphate = 5-(methylsulfanyl)-D-ribulose 1-phosphate</text>
        <dbReference type="Rhea" id="RHEA:19989"/>
        <dbReference type="ChEBI" id="CHEBI:58533"/>
        <dbReference type="ChEBI" id="CHEBI:58548"/>
        <dbReference type="EC" id="5.3.1.23"/>
    </reaction>
</comment>
<comment type="pathway">
    <text evidence="1">Amino-acid biosynthesis; L-methionine biosynthesis via salvage pathway; L-methionine from S-methyl-5-thio-alpha-D-ribose 1-phosphate: step 1/6.</text>
</comment>
<comment type="subcellular location">
    <subcellularLocation>
        <location evidence="1">Cytoplasm</location>
    </subcellularLocation>
    <subcellularLocation>
        <location evidence="1">Nucleus</location>
    </subcellularLocation>
</comment>
<comment type="similarity">
    <text evidence="1">Belongs to the eIF-2B alpha/beta/delta subunits family. MtnA subfamily.</text>
</comment>
<gene>
    <name type="ORF">NAEGRDRAFT_32363</name>
</gene>
<evidence type="ECO:0000255" key="1">
    <source>
        <dbReference type="HAMAP-Rule" id="MF_03119"/>
    </source>
</evidence>
<proteinExistence type="inferred from homology"/>
<protein>
    <recommendedName>
        <fullName evidence="1">Methylthioribose-1-phosphate isomerase</fullName>
        <shortName evidence="1">M1Pi</shortName>
        <shortName evidence="1">MTR-1-P isomerase</shortName>
        <ecNumber evidence="1">5.3.1.23</ecNumber>
    </recommendedName>
    <alternativeName>
        <fullName evidence="1">S-methyl-5-thioribose-1-phosphate isomerase</fullName>
    </alternativeName>
    <alternativeName>
        <fullName evidence="1">Translation initiation factor eIF-2B subunit alpha/beta/delta-like protein</fullName>
    </alternativeName>
</protein>
<sequence length="380" mass="41602">MSSSVGATLEAIKYTRGSLEILDQLLIPKSFIYEVVDTTEKAFHAIRDMKVRGAPAIAIVAVLTLAVEANQLLQSNDALLADASAIAKLFNEKLDRLAESRPTAVNLFQAVGDFKNKIAQSLETNKTGTEIVQLIIDEAEALMNRDIEENAKISECGSDHIISTNPSSTTLKVLTHCNTGALATMKYGTALGVIRFLQKKNVLEHAFCTETRPYNQGARLTAFELVYEKIPSTLICDSAVSYLFKTKKIDAIIVGADRVCNNGDTANKIGTYHIAVSAKHHGIPFYVAAPFTSIDLTLASGDLITIEERSEKEITHYRNNDERAVVENIGVWNPGFDVTTADLISGFFTDIGVFTPLTCATTGKKYYDLKTQQAEKLKQQ</sequence>
<reference key="1">
    <citation type="journal article" date="2010" name="Cell">
        <title>The genome of Naegleria gruberi illuminates early eukaryotic versatility.</title>
        <authorList>
            <person name="Fritz-Laylin L.K."/>
            <person name="Prochnik S.E."/>
            <person name="Ginger M.L."/>
            <person name="Dacks J.B."/>
            <person name="Carpenter M.L."/>
            <person name="Field M.C."/>
            <person name="Kuo A."/>
            <person name="Paredez A."/>
            <person name="Chapman J."/>
            <person name="Pham J."/>
            <person name="Shu S."/>
            <person name="Neupane R."/>
            <person name="Cipriano M."/>
            <person name="Mancuso J."/>
            <person name="Tu H."/>
            <person name="Salamov A."/>
            <person name="Lindquist E."/>
            <person name="Shapiro H."/>
            <person name="Lucas S."/>
            <person name="Grigoriev I.V."/>
            <person name="Cande W.Z."/>
            <person name="Fulton C."/>
            <person name="Rokhsar D.S."/>
            <person name="Dawson S.C."/>
        </authorList>
    </citation>
    <scope>NUCLEOTIDE SEQUENCE [LARGE SCALE GENOMIC DNA]</scope>
    <source>
        <strain>ATCC 30224 / NEG-M</strain>
    </source>
</reference>
<organism>
    <name type="scientific">Naegleria gruberi</name>
    <name type="common">Amoeba</name>
    <dbReference type="NCBI Taxonomy" id="5762"/>
    <lineage>
        <taxon>Eukaryota</taxon>
        <taxon>Discoba</taxon>
        <taxon>Heterolobosea</taxon>
        <taxon>Tetramitia</taxon>
        <taxon>Eutetramitia</taxon>
        <taxon>Vahlkampfiidae</taxon>
        <taxon>Naegleria</taxon>
    </lineage>
</organism>
<accession>D2VAA9</accession>
<keyword id="KW-0028">Amino-acid biosynthesis</keyword>
<keyword id="KW-0963">Cytoplasm</keyword>
<keyword id="KW-0413">Isomerase</keyword>
<keyword id="KW-0486">Methionine biosynthesis</keyword>
<keyword id="KW-0539">Nucleus</keyword>
<keyword id="KW-1185">Reference proteome</keyword>
<name>MTNA_NAEGR</name>